<comment type="function">
    <text evidence="1">Catalyzes the transfer of an acyl group from acyl-phosphate (acyl-PO(4)) to glycerol-3-phosphate (G3P) to form lysophosphatidic acid (LPA). This enzyme utilizes acyl-phosphate as fatty acyl donor, but not acyl-CoA or acyl-ACP.</text>
</comment>
<comment type="catalytic activity">
    <reaction evidence="1">
        <text>an acyl phosphate + sn-glycerol 3-phosphate = a 1-acyl-sn-glycero-3-phosphate + phosphate</text>
        <dbReference type="Rhea" id="RHEA:34075"/>
        <dbReference type="ChEBI" id="CHEBI:43474"/>
        <dbReference type="ChEBI" id="CHEBI:57597"/>
        <dbReference type="ChEBI" id="CHEBI:57970"/>
        <dbReference type="ChEBI" id="CHEBI:59918"/>
        <dbReference type="EC" id="2.3.1.275"/>
    </reaction>
</comment>
<comment type="pathway">
    <text evidence="1">Lipid metabolism; phospholipid metabolism.</text>
</comment>
<comment type="subunit">
    <text evidence="1">Probably interacts with PlsX.</text>
</comment>
<comment type="subcellular location">
    <subcellularLocation>
        <location evidence="1">Cell membrane</location>
        <topology evidence="1">Multi-pass membrane protein</topology>
    </subcellularLocation>
</comment>
<comment type="similarity">
    <text evidence="1">Belongs to the PlsY family.</text>
</comment>
<dbReference type="EC" id="2.3.1.275" evidence="1"/>
<dbReference type="EMBL" id="AE017321">
    <property type="protein sequence ID" value="AAW71011.1"/>
    <property type="molecule type" value="Genomic_DNA"/>
</dbReference>
<dbReference type="RefSeq" id="WP_011256621.1">
    <property type="nucleotide sequence ID" value="NC_006833.1"/>
</dbReference>
<dbReference type="SMR" id="Q5GSL3"/>
<dbReference type="STRING" id="292805.Wbm0423"/>
<dbReference type="KEGG" id="wbm:Wbm0423"/>
<dbReference type="eggNOG" id="COG0344">
    <property type="taxonomic scope" value="Bacteria"/>
</dbReference>
<dbReference type="HOGENOM" id="CLU_081254_7_1_5"/>
<dbReference type="UniPathway" id="UPA00085"/>
<dbReference type="Proteomes" id="UP000000534">
    <property type="component" value="Chromosome"/>
</dbReference>
<dbReference type="GO" id="GO:0005886">
    <property type="term" value="C:plasma membrane"/>
    <property type="evidence" value="ECO:0007669"/>
    <property type="project" value="UniProtKB-SubCell"/>
</dbReference>
<dbReference type="GO" id="GO:0043772">
    <property type="term" value="F:acyl-phosphate glycerol-3-phosphate acyltransferase activity"/>
    <property type="evidence" value="ECO:0007669"/>
    <property type="project" value="UniProtKB-UniRule"/>
</dbReference>
<dbReference type="GO" id="GO:0008654">
    <property type="term" value="P:phospholipid biosynthetic process"/>
    <property type="evidence" value="ECO:0007669"/>
    <property type="project" value="UniProtKB-UniRule"/>
</dbReference>
<dbReference type="HAMAP" id="MF_01043">
    <property type="entry name" value="PlsY"/>
    <property type="match status" value="1"/>
</dbReference>
<dbReference type="InterPro" id="IPR003811">
    <property type="entry name" value="G3P_acylTferase_PlsY"/>
</dbReference>
<dbReference type="NCBIfam" id="TIGR00023">
    <property type="entry name" value="glycerol-3-phosphate 1-O-acyltransferase PlsY"/>
    <property type="match status" value="1"/>
</dbReference>
<dbReference type="PANTHER" id="PTHR30309:SF0">
    <property type="entry name" value="GLYCEROL-3-PHOSPHATE ACYLTRANSFERASE-RELATED"/>
    <property type="match status" value="1"/>
</dbReference>
<dbReference type="PANTHER" id="PTHR30309">
    <property type="entry name" value="INNER MEMBRANE PROTEIN YGIH"/>
    <property type="match status" value="1"/>
</dbReference>
<dbReference type="Pfam" id="PF02660">
    <property type="entry name" value="G3P_acyltransf"/>
    <property type="match status" value="1"/>
</dbReference>
<dbReference type="SMART" id="SM01207">
    <property type="entry name" value="G3P_acyltransf"/>
    <property type="match status" value="1"/>
</dbReference>
<sequence length="191" mass="21100">MEKYIVFVLSYILGSIPFSLVITKIKGINLREVGSGNIGATNVARTGSKCIAALALLLDSLKGFIAVYIAKQFFDDGSFHMYASAILVVLGHMFPVWLKFSGGKGVATTLGILIALNISLVLAFVFVWLAVFFAFRYSSLASLTSTIAAVLSSFFFQRDLFFTLLTVAILIFFKHYRNIVNLLQGRERKFS</sequence>
<feature type="chain" id="PRO_0000188491" description="Glycerol-3-phosphate acyltransferase">
    <location>
        <begin position="1"/>
        <end position="191"/>
    </location>
</feature>
<feature type="transmembrane region" description="Helical" evidence="1">
    <location>
        <begin position="5"/>
        <end position="25"/>
    </location>
</feature>
<feature type="transmembrane region" description="Helical" evidence="1">
    <location>
        <begin position="50"/>
        <end position="70"/>
    </location>
</feature>
<feature type="transmembrane region" description="Helical" evidence="1">
    <location>
        <begin position="78"/>
        <end position="98"/>
    </location>
</feature>
<feature type="transmembrane region" description="Helical" evidence="1">
    <location>
        <begin position="112"/>
        <end position="132"/>
    </location>
</feature>
<feature type="transmembrane region" description="Helical" evidence="1">
    <location>
        <begin position="153"/>
        <end position="173"/>
    </location>
</feature>
<organism>
    <name type="scientific">Wolbachia sp. subsp. Brugia malayi (strain TRS)</name>
    <dbReference type="NCBI Taxonomy" id="292805"/>
    <lineage>
        <taxon>Bacteria</taxon>
        <taxon>Pseudomonadati</taxon>
        <taxon>Pseudomonadota</taxon>
        <taxon>Alphaproteobacteria</taxon>
        <taxon>Rickettsiales</taxon>
        <taxon>Anaplasmataceae</taxon>
        <taxon>Wolbachieae</taxon>
        <taxon>Wolbachia</taxon>
    </lineage>
</organism>
<proteinExistence type="inferred from homology"/>
<keyword id="KW-1003">Cell membrane</keyword>
<keyword id="KW-0444">Lipid biosynthesis</keyword>
<keyword id="KW-0443">Lipid metabolism</keyword>
<keyword id="KW-0472">Membrane</keyword>
<keyword id="KW-0594">Phospholipid biosynthesis</keyword>
<keyword id="KW-1208">Phospholipid metabolism</keyword>
<keyword id="KW-1185">Reference proteome</keyword>
<keyword id="KW-0808">Transferase</keyword>
<keyword id="KW-0812">Transmembrane</keyword>
<keyword id="KW-1133">Transmembrane helix</keyword>
<reference key="1">
    <citation type="journal article" date="2005" name="PLoS Biol.">
        <title>The Wolbachia genome of Brugia malayi: endosymbiont evolution within a human pathogenic nematode.</title>
        <authorList>
            <person name="Foster J."/>
            <person name="Ganatra M."/>
            <person name="Kamal I."/>
            <person name="Ware J."/>
            <person name="Makarova K."/>
            <person name="Ivanova N."/>
            <person name="Bhattacharyya A."/>
            <person name="Kapatral V."/>
            <person name="Kumar S."/>
            <person name="Posfai J."/>
            <person name="Vincze T."/>
            <person name="Ingram J."/>
            <person name="Moran L."/>
            <person name="Lapidus A."/>
            <person name="Omelchenko M."/>
            <person name="Kyrpides N."/>
            <person name="Ghedin E."/>
            <person name="Wang S."/>
            <person name="Goltsman E."/>
            <person name="Joukov V."/>
            <person name="Ostrovskaya O."/>
            <person name="Tsukerman K."/>
            <person name="Mazur M."/>
            <person name="Comb D."/>
            <person name="Koonin E."/>
            <person name="Slatko B."/>
        </authorList>
    </citation>
    <scope>NUCLEOTIDE SEQUENCE [LARGE SCALE GENOMIC DNA]</scope>
    <source>
        <strain>TRS</strain>
    </source>
</reference>
<protein>
    <recommendedName>
        <fullName evidence="1">Glycerol-3-phosphate acyltransferase</fullName>
    </recommendedName>
    <alternativeName>
        <fullName evidence="1">Acyl-PO4 G3P acyltransferase</fullName>
    </alternativeName>
    <alternativeName>
        <fullName evidence="1">Acyl-phosphate--glycerol-3-phosphate acyltransferase</fullName>
    </alternativeName>
    <alternativeName>
        <fullName evidence="1">G3P acyltransferase</fullName>
        <shortName evidence="1">GPAT</shortName>
        <ecNumber evidence="1">2.3.1.275</ecNumber>
    </alternativeName>
    <alternativeName>
        <fullName evidence="1">Lysophosphatidic acid synthase</fullName>
        <shortName evidence="1">LPA synthase</shortName>
    </alternativeName>
</protein>
<accession>Q5GSL3</accession>
<gene>
    <name evidence="1" type="primary">plsY</name>
    <name type="ordered locus">Wbm0423</name>
</gene>
<evidence type="ECO:0000255" key="1">
    <source>
        <dbReference type="HAMAP-Rule" id="MF_01043"/>
    </source>
</evidence>
<name>PLSY_WOLTR</name>